<comment type="function">
    <text evidence="1">Removes the formyl group from the N-terminal Met of newly synthesized proteins. Requires at least a dipeptide for an efficient rate of reaction. N-terminal L-methionine is a prerequisite for activity but the enzyme has broad specificity at other positions.</text>
</comment>
<comment type="catalytic activity">
    <reaction evidence="1">
        <text>N-terminal N-formyl-L-methionyl-[peptide] + H2O = N-terminal L-methionyl-[peptide] + formate</text>
        <dbReference type="Rhea" id="RHEA:24420"/>
        <dbReference type="Rhea" id="RHEA-COMP:10639"/>
        <dbReference type="Rhea" id="RHEA-COMP:10640"/>
        <dbReference type="ChEBI" id="CHEBI:15377"/>
        <dbReference type="ChEBI" id="CHEBI:15740"/>
        <dbReference type="ChEBI" id="CHEBI:49298"/>
        <dbReference type="ChEBI" id="CHEBI:64731"/>
        <dbReference type="EC" id="3.5.1.88"/>
    </reaction>
</comment>
<comment type="cofactor">
    <cofactor evidence="1">
        <name>Fe(2+)</name>
        <dbReference type="ChEBI" id="CHEBI:29033"/>
    </cofactor>
    <text evidence="1">Binds 1 Fe(2+) ion.</text>
</comment>
<comment type="similarity">
    <text evidence="1">Belongs to the polypeptide deformylase family.</text>
</comment>
<organism>
    <name type="scientific">Staphylococcus aureus (strain MSSA476)</name>
    <dbReference type="NCBI Taxonomy" id="282459"/>
    <lineage>
        <taxon>Bacteria</taxon>
        <taxon>Bacillati</taxon>
        <taxon>Bacillota</taxon>
        <taxon>Bacilli</taxon>
        <taxon>Bacillales</taxon>
        <taxon>Staphylococcaceae</taxon>
        <taxon>Staphylococcus</taxon>
    </lineage>
</organism>
<reference key="1">
    <citation type="journal article" date="2004" name="Proc. Natl. Acad. Sci. U.S.A.">
        <title>Complete genomes of two clinical Staphylococcus aureus strains: evidence for the rapid evolution of virulence and drug resistance.</title>
        <authorList>
            <person name="Holden M.T.G."/>
            <person name="Feil E.J."/>
            <person name="Lindsay J.A."/>
            <person name="Peacock S.J."/>
            <person name="Day N.P.J."/>
            <person name="Enright M.C."/>
            <person name="Foster T.J."/>
            <person name="Moore C.E."/>
            <person name="Hurst L."/>
            <person name="Atkin R."/>
            <person name="Barron A."/>
            <person name="Bason N."/>
            <person name="Bentley S.D."/>
            <person name="Chillingworth C."/>
            <person name="Chillingworth T."/>
            <person name="Churcher C."/>
            <person name="Clark L."/>
            <person name="Corton C."/>
            <person name="Cronin A."/>
            <person name="Doggett J."/>
            <person name="Dowd L."/>
            <person name="Feltwell T."/>
            <person name="Hance Z."/>
            <person name="Harris B."/>
            <person name="Hauser H."/>
            <person name="Holroyd S."/>
            <person name="Jagels K."/>
            <person name="James K.D."/>
            <person name="Lennard N."/>
            <person name="Line A."/>
            <person name="Mayes R."/>
            <person name="Moule S."/>
            <person name="Mungall K."/>
            <person name="Ormond D."/>
            <person name="Quail M.A."/>
            <person name="Rabbinowitsch E."/>
            <person name="Rutherford K.M."/>
            <person name="Sanders M."/>
            <person name="Sharp S."/>
            <person name="Simmonds M."/>
            <person name="Stevens K."/>
            <person name="Whitehead S."/>
            <person name="Barrell B.G."/>
            <person name="Spratt B.G."/>
            <person name="Parkhill J."/>
        </authorList>
    </citation>
    <scope>NUCLEOTIDE SEQUENCE [LARGE SCALE GENOMIC DNA]</scope>
    <source>
        <strain>MSSA476</strain>
    </source>
</reference>
<name>DEF_STAAS</name>
<protein>
    <recommendedName>
        <fullName evidence="1">Peptide deformylase</fullName>
        <shortName evidence="1">PDF</shortName>
        <ecNumber evidence="1">3.5.1.88</ecNumber>
    </recommendedName>
    <alternativeName>
        <fullName evidence="1">Polypeptide deformylase</fullName>
    </alternativeName>
</protein>
<proteinExistence type="inferred from homology"/>
<feature type="chain" id="PRO_0000082842" description="Peptide deformylase">
    <location>
        <begin position="1"/>
        <end position="183"/>
    </location>
</feature>
<feature type="active site" evidence="1">
    <location>
        <position position="155"/>
    </location>
</feature>
<feature type="binding site" evidence="1">
    <location>
        <position position="111"/>
    </location>
    <ligand>
        <name>Fe cation</name>
        <dbReference type="ChEBI" id="CHEBI:24875"/>
    </ligand>
</feature>
<feature type="binding site" evidence="1">
    <location>
        <position position="154"/>
    </location>
    <ligand>
        <name>Fe cation</name>
        <dbReference type="ChEBI" id="CHEBI:24875"/>
    </ligand>
</feature>
<feature type="binding site" evidence="1">
    <location>
        <position position="158"/>
    </location>
    <ligand>
        <name>Fe cation</name>
        <dbReference type="ChEBI" id="CHEBI:24875"/>
    </ligand>
</feature>
<gene>
    <name evidence="1" type="primary">def</name>
    <name type="synonym">def1</name>
    <name type="synonym">pdf1</name>
    <name type="ordered locus">SAS1026</name>
</gene>
<dbReference type="EC" id="3.5.1.88" evidence="1"/>
<dbReference type="EMBL" id="BX571857">
    <property type="protein sequence ID" value="CAG42800.1"/>
    <property type="molecule type" value="Genomic_DNA"/>
</dbReference>
<dbReference type="RefSeq" id="WP_000957036.1">
    <property type="nucleotide sequence ID" value="NC_002953.3"/>
</dbReference>
<dbReference type="BMRB" id="Q6GAC3"/>
<dbReference type="SMR" id="Q6GAC3"/>
<dbReference type="KEGG" id="sas:SAS1026"/>
<dbReference type="HOGENOM" id="CLU_061901_4_0_9"/>
<dbReference type="GO" id="GO:0046872">
    <property type="term" value="F:metal ion binding"/>
    <property type="evidence" value="ECO:0007669"/>
    <property type="project" value="UniProtKB-KW"/>
</dbReference>
<dbReference type="GO" id="GO:0042586">
    <property type="term" value="F:peptide deformylase activity"/>
    <property type="evidence" value="ECO:0007669"/>
    <property type="project" value="UniProtKB-UniRule"/>
</dbReference>
<dbReference type="GO" id="GO:0043686">
    <property type="term" value="P:co-translational protein modification"/>
    <property type="evidence" value="ECO:0007669"/>
    <property type="project" value="TreeGrafter"/>
</dbReference>
<dbReference type="GO" id="GO:0006412">
    <property type="term" value="P:translation"/>
    <property type="evidence" value="ECO:0007669"/>
    <property type="project" value="UniProtKB-UniRule"/>
</dbReference>
<dbReference type="CDD" id="cd00487">
    <property type="entry name" value="Pep_deformylase"/>
    <property type="match status" value="1"/>
</dbReference>
<dbReference type="FunFam" id="3.90.45.10:FF:000002">
    <property type="entry name" value="Peptide deformylase"/>
    <property type="match status" value="1"/>
</dbReference>
<dbReference type="Gene3D" id="3.90.45.10">
    <property type="entry name" value="Peptide deformylase"/>
    <property type="match status" value="1"/>
</dbReference>
<dbReference type="HAMAP" id="MF_00163">
    <property type="entry name" value="Pep_deformylase"/>
    <property type="match status" value="1"/>
</dbReference>
<dbReference type="InterPro" id="IPR023635">
    <property type="entry name" value="Peptide_deformylase"/>
</dbReference>
<dbReference type="InterPro" id="IPR036821">
    <property type="entry name" value="Peptide_deformylase_sf"/>
</dbReference>
<dbReference type="NCBIfam" id="TIGR00079">
    <property type="entry name" value="pept_deformyl"/>
    <property type="match status" value="1"/>
</dbReference>
<dbReference type="PANTHER" id="PTHR10458">
    <property type="entry name" value="PEPTIDE DEFORMYLASE"/>
    <property type="match status" value="1"/>
</dbReference>
<dbReference type="PANTHER" id="PTHR10458:SF8">
    <property type="entry name" value="PEPTIDE DEFORMYLASE 2"/>
    <property type="match status" value="1"/>
</dbReference>
<dbReference type="Pfam" id="PF01327">
    <property type="entry name" value="Pep_deformylase"/>
    <property type="match status" value="1"/>
</dbReference>
<dbReference type="PIRSF" id="PIRSF004749">
    <property type="entry name" value="Pep_def"/>
    <property type="match status" value="1"/>
</dbReference>
<dbReference type="PRINTS" id="PR01576">
    <property type="entry name" value="PDEFORMYLASE"/>
</dbReference>
<dbReference type="SUPFAM" id="SSF56420">
    <property type="entry name" value="Peptide deformylase"/>
    <property type="match status" value="1"/>
</dbReference>
<evidence type="ECO:0000255" key="1">
    <source>
        <dbReference type="HAMAP-Rule" id="MF_00163"/>
    </source>
</evidence>
<accession>Q6GAC3</accession>
<sequence length="183" mass="20560">MLTMKDIIRDGHPTLRQKAAELELPLTKEEKETLIAMREFLVNSQDEEIAKRYGLRSGVGLAAPQINISKRMIAVLIPDDGSGKSYDYMLVNPKIVSHSVQEAYLPTGEGCLSVDDNVAGLVHRHNRITIKAKDIEGNDIQLRLKGYPAIVFQHEIDHLNGVMFYDHIDKDHPLQPHTDAVEV</sequence>
<keyword id="KW-0378">Hydrolase</keyword>
<keyword id="KW-0408">Iron</keyword>
<keyword id="KW-0479">Metal-binding</keyword>
<keyword id="KW-0648">Protein biosynthesis</keyword>